<reference key="1">
    <citation type="journal article" date="2007" name="Nat. Genet.">
        <title>Genomic analysis of Bartonella identifies type IV secretion systems as host adaptability factors.</title>
        <authorList>
            <person name="Saenz H.L."/>
            <person name="Engel P."/>
            <person name="Stoeckli M.C."/>
            <person name="Lanz C."/>
            <person name="Raddatz G."/>
            <person name="Vayssier-Taussat M."/>
            <person name="Birtles R."/>
            <person name="Schuster S.C."/>
            <person name="Dehio C."/>
        </authorList>
    </citation>
    <scope>NUCLEOTIDE SEQUENCE [LARGE SCALE GENOMIC DNA]</scope>
    <source>
        <strain>CIP 105476 / IBS 506</strain>
    </source>
</reference>
<dbReference type="EMBL" id="AM260525">
    <property type="protein sequence ID" value="CAK01824.1"/>
    <property type="molecule type" value="Genomic_DNA"/>
</dbReference>
<dbReference type="RefSeq" id="WP_012231964.1">
    <property type="nucleotide sequence ID" value="NC_010161.1"/>
</dbReference>
<dbReference type="SMR" id="A9IVX4"/>
<dbReference type="KEGG" id="btr:BT_1475"/>
<dbReference type="eggNOG" id="COG0102">
    <property type="taxonomic scope" value="Bacteria"/>
</dbReference>
<dbReference type="HOGENOM" id="CLU_082184_2_0_5"/>
<dbReference type="Proteomes" id="UP000001592">
    <property type="component" value="Chromosome"/>
</dbReference>
<dbReference type="GO" id="GO:0022625">
    <property type="term" value="C:cytosolic large ribosomal subunit"/>
    <property type="evidence" value="ECO:0007669"/>
    <property type="project" value="TreeGrafter"/>
</dbReference>
<dbReference type="GO" id="GO:0003729">
    <property type="term" value="F:mRNA binding"/>
    <property type="evidence" value="ECO:0007669"/>
    <property type="project" value="TreeGrafter"/>
</dbReference>
<dbReference type="GO" id="GO:0003735">
    <property type="term" value="F:structural constituent of ribosome"/>
    <property type="evidence" value="ECO:0007669"/>
    <property type="project" value="InterPro"/>
</dbReference>
<dbReference type="GO" id="GO:0017148">
    <property type="term" value="P:negative regulation of translation"/>
    <property type="evidence" value="ECO:0007669"/>
    <property type="project" value="TreeGrafter"/>
</dbReference>
<dbReference type="GO" id="GO:0006412">
    <property type="term" value="P:translation"/>
    <property type="evidence" value="ECO:0007669"/>
    <property type="project" value="UniProtKB-UniRule"/>
</dbReference>
<dbReference type="CDD" id="cd00392">
    <property type="entry name" value="Ribosomal_L13"/>
    <property type="match status" value="1"/>
</dbReference>
<dbReference type="FunFam" id="3.90.1180.10:FF:000001">
    <property type="entry name" value="50S ribosomal protein L13"/>
    <property type="match status" value="1"/>
</dbReference>
<dbReference type="Gene3D" id="3.90.1180.10">
    <property type="entry name" value="Ribosomal protein L13"/>
    <property type="match status" value="1"/>
</dbReference>
<dbReference type="HAMAP" id="MF_01366">
    <property type="entry name" value="Ribosomal_uL13"/>
    <property type="match status" value="1"/>
</dbReference>
<dbReference type="InterPro" id="IPR005822">
    <property type="entry name" value="Ribosomal_uL13"/>
</dbReference>
<dbReference type="InterPro" id="IPR005823">
    <property type="entry name" value="Ribosomal_uL13_bac-type"/>
</dbReference>
<dbReference type="InterPro" id="IPR036899">
    <property type="entry name" value="Ribosomal_uL13_sf"/>
</dbReference>
<dbReference type="NCBIfam" id="TIGR01066">
    <property type="entry name" value="rplM_bact"/>
    <property type="match status" value="1"/>
</dbReference>
<dbReference type="PANTHER" id="PTHR11545:SF2">
    <property type="entry name" value="LARGE RIBOSOMAL SUBUNIT PROTEIN UL13M"/>
    <property type="match status" value="1"/>
</dbReference>
<dbReference type="PANTHER" id="PTHR11545">
    <property type="entry name" value="RIBOSOMAL PROTEIN L13"/>
    <property type="match status" value="1"/>
</dbReference>
<dbReference type="Pfam" id="PF00572">
    <property type="entry name" value="Ribosomal_L13"/>
    <property type="match status" value="1"/>
</dbReference>
<dbReference type="PIRSF" id="PIRSF002181">
    <property type="entry name" value="Ribosomal_L13"/>
    <property type="match status" value="1"/>
</dbReference>
<dbReference type="SUPFAM" id="SSF52161">
    <property type="entry name" value="Ribosomal protein L13"/>
    <property type="match status" value="1"/>
</dbReference>
<sequence length="154" mass="17482">MATFSQKPTEVVKKWVIIDAENLVLGRLAAFVANRLRGKHKATFTPHVDDGDNVIVINADKIALTGKKYTDKKYYWHTGYIGGIKERTARQLLEGRFPERVVEKAVERMIPRGPLGRRQLKNLRVYAGSQHPHEAQQPESLDVGALNRKNKRIA</sequence>
<evidence type="ECO:0000255" key="1">
    <source>
        <dbReference type="HAMAP-Rule" id="MF_01366"/>
    </source>
</evidence>
<evidence type="ECO:0000305" key="2"/>
<gene>
    <name evidence="1" type="primary">rplM</name>
    <name type="ordered locus">BT_1475</name>
</gene>
<proteinExistence type="inferred from homology"/>
<keyword id="KW-0687">Ribonucleoprotein</keyword>
<keyword id="KW-0689">Ribosomal protein</keyword>
<organism>
    <name type="scientific">Bartonella tribocorum (strain CIP 105476 / IBS 506)</name>
    <dbReference type="NCBI Taxonomy" id="382640"/>
    <lineage>
        <taxon>Bacteria</taxon>
        <taxon>Pseudomonadati</taxon>
        <taxon>Pseudomonadota</taxon>
        <taxon>Alphaproteobacteria</taxon>
        <taxon>Hyphomicrobiales</taxon>
        <taxon>Bartonellaceae</taxon>
        <taxon>Bartonella</taxon>
    </lineage>
</organism>
<name>RL13_BART1</name>
<feature type="chain" id="PRO_1000087076" description="Large ribosomal subunit protein uL13">
    <location>
        <begin position="1"/>
        <end position="154"/>
    </location>
</feature>
<protein>
    <recommendedName>
        <fullName evidence="1">Large ribosomal subunit protein uL13</fullName>
    </recommendedName>
    <alternativeName>
        <fullName evidence="2">50S ribosomal protein L13</fullName>
    </alternativeName>
</protein>
<comment type="function">
    <text evidence="1">This protein is one of the early assembly proteins of the 50S ribosomal subunit, although it is not seen to bind rRNA by itself. It is important during the early stages of 50S assembly.</text>
</comment>
<comment type="subunit">
    <text evidence="1">Part of the 50S ribosomal subunit.</text>
</comment>
<comment type="similarity">
    <text evidence="1">Belongs to the universal ribosomal protein uL13 family.</text>
</comment>
<accession>A9IVX4</accession>